<gene>
    <name type="primary">tusC</name>
    <name type="ordered locus">VF_0229</name>
</gene>
<name>TUSC_ALIF1</name>
<comment type="function">
    <text evidence="1">Could be part of a sulfur-relay system.</text>
</comment>
<comment type="subcellular location">
    <subcellularLocation>
        <location evidence="1">Cytoplasm</location>
    </subcellularLocation>
</comment>
<comment type="similarity">
    <text evidence="2">Belongs to the DsrF/TusC family.</text>
</comment>
<reference key="1">
    <citation type="journal article" date="2005" name="Proc. Natl. Acad. Sci. U.S.A.">
        <title>Complete genome sequence of Vibrio fischeri: a symbiotic bacterium with pathogenic congeners.</title>
        <authorList>
            <person name="Ruby E.G."/>
            <person name="Urbanowski M."/>
            <person name="Campbell J."/>
            <person name="Dunn A."/>
            <person name="Faini M."/>
            <person name="Gunsalus R."/>
            <person name="Lostroh P."/>
            <person name="Lupp C."/>
            <person name="McCann J."/>
            <person name="Millikan D."/>
            <person name="Schaefer A."/>
            <person name="Stabb E."/>
            <person name="Stevens A."/>
            <person name="Visick K."/>
            <person name="Whistler C."/>
            <person name="Greenberg E.P."/>
        </authorList>
    </citation>
    <scope>NUCLEOTIDE SEQUENCE [LARGE SCALE GENOMIC DNA]</scope>
    <source>
        <strain>ATCC 700601 / ES114</strain>
    </source>
</reference>
<feature type="chain" id="PRO_0000214892" description="Protein TusC homolog">
    <location>
        <begin position="1"/>
        <end position="118"/>
    </location>
</feature>
<organism>
    <name type="scientific">Aliivibrio fischeri (strain ATCC 700601 / ES114)</name>
    <name type="common">Vibrio fischeri</name>
    <dbReference type="NCBI Taxonomy" id="312309"/>
    <lineage>
        <taxon>Bacteria</taxon>
        <taxon>Pseudomonadati</taxon>
        <taxon>Pseudomonadota</taxon>
        <taxon>Gammaproteobacteria</taxon>
        <taxon>Vibrionales</taxon>
        <taxon>Vibrionaceae</taxon>
        <taxon>Aliivibrio</taxon>
    </lineage>
</organism>
<proteinExistence type="inferred from homology"/>
<dbReference type="EMBL" id="CP000020">
    <property type="protein sequence ID" value="AAW84724.1"/>
    <property type="molecule type" value="Genomic_DNA"/>
</dbReference>
<dbReference type="RefSeq" id="WP_011261074.1">
    <property type="nucleotide sequence ID" value="NC_006840.2"/>
</dbReference>
<dbReference type="RefSeq" id="YP_203612.1">
    <property type="nucleotide sequence ID" value="NC_006840.2"/>
</dbReference>
<dbReference type="SMR" id="Q5E8C2"/>
<dbReference type="STRING" id="312309.VF_0229"/>
<dbReference type="EnsemblBacteria" id="AAW84724">
    <property type="protein sequence ID" value="AAW84724"/>
    <property type="gene ID" value="VF_0229"/>
</dbReference>
<dbReference type="GeneID" id="54162851"/>
<dbReference type="KEGG" id="vfi:VF_0229"/>
<dbReference type="PATRIC" id="fig|312309.11.peg.225"/>
<dbReference type="eggNOG" id="COG2923">
    <property type="taxonomic scope" value="Bacteria"/>
</dbReference>
<dbReference type="HOGENOM" id="CLU_155943_1_0_6"/>
<dbReference type="OrthoDB" id="9789418at2"/>
<dbReference type="Proteomes" id="UP000000537">
    <property type="component" value="Chromosome I"/>
</dbReference>
<dbReference type="GO" id="GO:0005737">
    <property type="term" value="C:cytoplasm"/>
    <property type="evidence" value="ECO:0007669"/>
    <property type="project" value="UniProtKB-SubCell"/>
</dbReference>
<dbReference type="Gene3D" id="3.40.1260.10">
    <property type="entry name" value="DsrEFH-like"/>
    <property type="match status" value="1"/>
</dbReference>
<dbReference type="InterPro" id="IPR027396">
    <property type="entry name" value="DsrEFH-like"/>
</dbReference>
<dbReference type="InterPro" id="IPR003787">
    <property type="entry name" value="Sulphur_relay_DsrE/F-like"/>
</dbReference>
<dbReference type="InterPro" id="IPR017462">
    <property type="entry name" value="Sulphur_relay_TusC/DsrF"/>
</dbReference>
<dbReference type="NCBIfam" id="NF001238">
    <property type="entry name" value="PRK00211.1"/>
    <property type="match status" value="1"/>
</dbReference>
<dbReference type="NCBIfam" id="TIGR03010">
    <property type="entry name" value="sulf_tusC_dsrF"/>
    <property type="match status" value="1"/>
</dbReference>
<dbReference type="PANTHER" id="PTHR38780">
    <property type="entry name" value="PROTEIN TUSC"/>
    <property type="match status" value="1"/>
</dbReference>
<dbReference type="PANTHER" id="PTHR38780:SF1">
    <property type="entry name" value="PROTEIN TUSC"/>
    <property type="match status" value="1"/>
</dbReference>
<dbReference type="Pfam" id="PF02635">
    <property type="entry name" value="DsrE"/>
    <property type="match status" value="1"/>
</dbReference>
<dbReference type="SUPFAM" id="SSF75169">
    <property type="entry name" value="DsrEFH-like"/>
    <property type="match status" value="1"/>
</dbReference>
<keyword id="KW-0963">Cytoplasm</keyword>
<keyword id="KW-1185">Reference proteome</keyword>
<evidence type="ECO:0000250" key="1"/>
<evidence type="ECO:0000305" key="2"/>
<sequence length="118" mass="13373">MNRLGFVFQSAPHSTSKGREGLDAILAASAYSEDIQIFFIGDGVLQLLKNQEPEKILSRDYISGFKMLELYDLEEIFVCQNAMGNRGIKEEYLLIDVDSISNKDINEKLSQCDQIMVF</sequence>
<protein>
    <recommendedName>
        <fullName>Protein TusC homolog</fullName>
    </recommendedName>
</protein>
<accession>Q5E8C2</accession>